<organism>
    <name type="scientific">Mus musculus</name>
    <name type="common">Mouse</name>
    <dbReference type="NCBI Taxonomy" id="10090"/>
    <lineage>
        <taxon>Eukaryota</taxon>
        <taxon>Metazoa</taxon>
        <taxon>Chordata</taxon>
        <taxon>Craniata</taxon>
        <taxon>Vertebrata</taxon>
        <taxon>Euteleostomi</taxon>
        <taxon>Mammalia</taxon>
        <taxon>Eutheria</taxon>
        <taxon>Euarchontoglires</taxon>
        <taxon>Glires</taxon>
        <taxon>Rodentia</taxon>
        <taxon>Myomorpha</taxon>
        <taxon>Muroidea</taxon>
        <taxon>Muridae</taxon>
        <taxon>Murinae</taxon>
        <taxon>Mus</taxon>
        <taxon>Mus</taxon>
    </lineage>
</organism>
<keyword id="KW-0238">DNA-binding</keyword>
<keyword id="KW-0443">Lipid metabolism</keyword>
<keyword id="KW-0479">Metal-binding</keyword>
<keyword id="KW-0539">Nucleus</keyword>
<keyword id="KW-1185">Reference proteome</keyword>
<keyword id="KW-0677">Repeat</keyword>
<keyword id="KW-0804">Transcription</keyword>
<keyword id="KW-0805">Transcription regulation</keyword>
<keyword id="KW-0862">Zinc</keyword>
<keyword id="KW-0863">Zinc-finger</keyword>
<comment type="function">
    <text evidence="4 5">Putative transcription factor that appears to regulate lipid metabolism.</text>
</comment>
<comment type="subcellular location">
    <subcellularLocation>
        <location evidence="5">Nucleus</location>
    </subcellularLocation>
</comment>
<comment type="polymorphism">
    <text evidence="4">New Zealand obese (NZO) mice carry a loss-of-function mutation due to the integration of the retrotransposon IAPLTR1 in intron 3 which generates a truncated mRNA lacking both the KRAB and the C2H2 domains. This strain is less diabetes prone (NZO).</text>
</comment>
<comment type="similarity">
    <text evidence="6">Belongs to the krueppel C2H2-type zinc-finger protein family.</text>
</comment>
<feature type="chain" id="PRO_0000444716" description="Zinc finger protein 69">
    <location>
        <begin position="1"/>
        <end position="587"/>
    </location>
</feature>
<feature type="domain" description="KRAB" evidence="2">
    <location>
        <begin position="76"/>
        <end position="147"/>
    </location>
</feature>
<feature type="zinc finger region" description="C2H2-type 1" evidence="1">
    <location>
        <begin position="271"/>
        <end position="293"/>
    </location>
</feature>
<feature type="zinc finger region" description="C2H2-type 2" evidence="1">
    <location>
        <begin position="299"/>
        <end position="321"/>
    </location>
</feature>
<feature type="zinc finger region" description="C2H2-type 3" evidence="1">
    <location>
        <begin position="327"/>
        <end position="349"/>
    </location>
</feature>
<feature type="zinc finger region" description="C2H2-type 4" evidence="1">
    <location>
        <begin position="355"/>
        <end position="377"/>
    </location>
</feature>
<feature type="zinc finger region" description="C2H2-type 5" evidence="1">
    <location>
        <begin position="383"/>
        <end position="405"/>
    </location>
</feature>
<feature type="zinc finger region" description="C2H2-type 6" evidence="1">
    <location>
        <begin position="411"/>
        <end position="433"/>
    </location>
</feature>
<feature type="zinc finger region" description="C2H2-type 7" evidence="1">
    <location>
        <begin position="439"/>
        <end position="461"/>
    </location>
</feature>
<feature type="zinc finger region" description="C2H2-type 8" evidence="1">
    <location>
        <begin position="467"/>
        <end position="489"/>
    </location>
</feature>
<feature type="zinc finger region" description="C2H2-type 9" evidence="1">
    <location>
        <begin position="495"/>
        <end position="517"/>
    </location>
</feature>
<feature type="region of interest" description="Disordered" evidence="3">
    <location>
        <begin position="42"/>
        <end position="128"/>
    </location>
</feature>
<feature type="region of interest" description="Disordered" evidence="3">
    <location>
        <begin position="564"/>
        <end position="587"/>
    </location>
</feature>
<feature type="compositionally biased region" description="Basic and acidic residues" evidence="3">
    <location>
        <begin position="574"/>
        <end position="587"/>
    </location>
</feature>
<dbReference type="EMBL" id="AL606904">
    <property type="status" value="NOT_ANNOTATED_CDS"/>
    <property type="molecule type" value="Genomic_DNA"/>
</dbReference>
<dbReference type="EMBL" id="AL731722">
    <property type="status" value="NOT_ANNOTATED_CDS"/>
    <property type="molecule type" value="Genomic_DNA"/>
</dbReference>
<dbReference type="CCDS" id="CCDS18597.2"/>
<dbReference type="RefSeq" id="NP_001005788.2">
    <property type="nucleotide sequence ID" value="NM_001005788.3"/>
</dbReference>
<dbReference type="SMR" id="A2A761"/>
<dbReference type="FunCoup" id="A2A761">
    <property type="interactions" value="521"/>
</dbReference>
<dbReference type="STRING" id="10090.ENSMUSP00000101887"/>
<dbReference type="GlyGen" id="A2A761">
    <property type="glycosylation" value="3 sites"/>
</dbReference>
<dbReference type="iPTMnet" id="A2A761"/>
<dbReference type="PhosphoSitePlus" id="A2A761"/>
<dbReference type="PaxDb" id="10090-ENSMUSP00000101887"/>
<dbReference type="PeptideAtlas" id="A2A761"/>
<dbReference type="ProteomicsDB" id="344659"/>
<dbReference type="Antibodypedia" id="32097">
    <property type="antibodies" value="40 antibodies from 16 providers"/>
</dbReference>
<dbReference type="DNASU" id="381549"/>
<dbReference type="Ensembl" id="ENSMUST00000106280.8">
    <property type="protein sequence ID" value="ENSMUSP00000101887.2"/>
    <property type="gene ID" value="ENSMUSG00000064141.15"/>
</dbReference>
<dbReference type="Ensembl" id="ENSMUST00000106281.3">
    <property type="protein sequence ID" value="ENSMUSP00000101888.3"/>
    <property type="gene ID" value="ENSMUSG00000064141.15"/>
</dbReference>
<dbReference type="GeneID" id="381549"/>
<dbReference type="KEGG" id="mmu:381549"/>
<dbReference type="UCSC" id="uc008unv.2">
    <property type="organism name" value="mouse"/>
</dbReference>
<dbReference type="AGR" id="MGI:107794"/>
<dbReference type="CTD" id="339559"/>
<dbReference type="MGI" id="MGI:107794">
    <property type="gene designation" value="Zfp69"/>
</dbReference>
<dbReference type="VEuPathDB" id="HostDB:ENSMUSG00000064141"/>
<dbReference type="eggNOG" id="KOG1721">
    <property type="taxonomic scope" value="Eukaryota"/>
</dbReference>
<dbReference type="GeneTree" id="ENSGT00940000162278"/>
<dbReference type="HOGENOM" id="CLU_002678_0_13_1"/>
<dbReference type="InParanoid" id="A2A761"/>
<dbReference type="OMA" id="VIIEHRH"/>
<dbReference type="OrthoDB" id="4748970at2759"/>
<dbReference type="PhylomeDB" id="A2A761"/>
<dbReference type="TreeFam" id="TF337055"/>
<dbReference type="Reactome" id="R-MMU-212436">
    <property type="pathway name" value="Generic Transcription Pathway"/>
</dbReference>
<dbReference type="BioGRID-ORCS" id="381549">
    <property type="hits" value="4 hits in 76 CRISPR screens"/>
</dbReference>
<dbReference type="ChiTaRS" id="Zfp69">
    <property type="organism name" value="mouse"/>
</dbReference>
<dbReference type="PRO" id="PR:A2A761"/>
<dbReference type="Proteomes" id="UP000000589">
    <property type="component" value="Chromosome 4"/>
</dbReference>
<dbReference type="RNAct" id="A2A761">
    <property type="molecule type" value="protein"/>
</dbReference>
<dbReference type="Bgee" id="ENSMUSG00000064141">
    <property type="expression patterns" value="Expressed in tertiary ovarian follicle and 136 other cell types or tissues"/>
</dbReference>
<dbReference type="ExpressionAtlas" id="A2A761">
    <property type="expression patterns" value="baseline and differential"/>
</dbReference>
<dbReference type="GO" id="GO:0005634">
    <property type="term" value="C:nucleus"/>
    <property type="evidence" value="ECO:0000314"/>
    <property type="project" value="UniProtKB"/>
</dbReference>
<dbReference type="GO" id="GO:0003677">
    <property type="term" value="F:DNA binding"/>
    <property type="evidence" value="ECO:0007669"/>
    <property type="project" value="UniProtKB-KW"/>
</dbReference>
<dbReference type="GO" id="GO:0008270">
    <property type="term" value="F:zinc ion binding"/>
    <property type="evidence" value="ECO:0007669"/>
    <property type="project" value="UniProtKB-KW"/>
</dbReference>
<dbReference type="GO" id="GO:0006629">
    <property type="term" value="P:lipid metabolic process"/>
    <property type="evidence" value="ECO:0007669"/>
    <property type="project" value="UniProtKB-KW"/>
</dbReference>
<dbReference type="GO" id="GO:0006355">
    <property type="term" value="P:regulation of DNA-templated transcription"/>
    <property type="evidence" value="ECO:0007669"/>
    <property type="project" value="InterPro"/>
</dbReference>
<dbReference type="GO" id="GO:0019216">
    <property type="term" value="P:regulation of lipid metabolic process"/>
    <property type="evidence" value="ECO:0000315"/>
    <property type="project" value="UniProtKB"/>
</dbReference>
<dbReference type="CDD" id="cd07765">
    <property type="entry name" value="KRAB_A-box"/>
    <property type="match status" value="1"/>
</dbReference>
<dbReference type="FunFam" id="3.30.160.60:FF:003288">
    <property type="entry name" value="Uncharacterized protein"/>
    <property type="match status" value="1"/>
</dbReference>
<dbReference type="FunFam" id="3.30.160.60:FF:000295">
    <property type="entry name" value="zinc finger protein 19"/>
    <property type="match status" value="1"/>
</dbReference>
<dbReference type="FunFam" id="3.30.160.60:FF:002343">
    <property type="entry name" value="Zinc finger protein 33A"/>
    <property type="match status" value="1"/>
</dbReference>
<dbReference type="FunFam" id="3.30.160.60:FF:002090">
    <property type="entry name" value="Zinc finger protein 473"/>
    <property type="match status" value="1"/>
</dbReference>
<dbReference type="FunFam" id="3.30.160.60:FF:000145">
    <property type="entry name" value="Zinc finger protein 574"/>
    <property type="match status" value="1"/>
</dbReference>
<dbReference type="FunFam" id="3.30.160.60:FF:000017">
    <property type="entry name" value="zinc finger protein 62 homolog"/>
    <property type="match status" value="1"/>
</dbReference>
<dbReference type="FunFam" id="3.30.160.60:FF:000290">
    <property type="entry name" value="Zinc finger protein 697 isoform X1"/>
    <property type="match status" value="1"/>
</dbReference>
<dbReference type="FunFam" id="3.30.160.60:FF:000307">
    <property type="entry name" value="Zinc finger protein ZFP69 isoform 1"/>
    <property type="match status" value="1"/>
</dbReference>
<dbReference type="FunFam" id="3.30.160.60:FF:000941">
    <property type="entry name" value="zinc finger protein ZFP69 isoform X2"/>
    <property type="match status" value="1"/>
</dbReference>
<dbReference type="Gene3D" id="6.10.140.140">
    <property type="match status" value="1"/>
</dbReference>
<dbReference type="Gene3D" id="3.30.160.60">
    <property type="entry name" value="Classic Zinc Finger"/>
    <property type="match status" value="9"/>
</dbReference>
<dbReference type="InterPro" id="IPR001909">
    <property type="entry name" value="KRAB"/>
</dbReference>
<dbReference type="InterPro" id="IPR036051">
    <property type="entry name" value="KRAB_dom_sf"/>
</dbReference>
<dbReference type="InterPro" id="IPR036236">
    <property type="entry name" value="Znf_C2H2_sf"/>
</dbReference>
<dbReference type="InterPro" id="IPR013087">
    <property type="entry name" value="Znf_C2H2_type"/>
</dbReference>
<dbReference type="PANTHER" id="PTHR24399">
    <property type="entry name" value="ZINC FINGER AND BTB DOMAIN-CONTAINING"/>
    <property type="match status" value="1"/>
</dbReference>
<dbReference type="PANTHER" id="PTHR24399:SF74">
    <property type="entry name" value="ZINC FINGER PROTEIN 606"/>
    <property type="match status" value="1"/>
</dbReference>
<dbReference type="Pfam" id="PF01352">
    <property type="entry name" value="KRAB"/>
    <property type="match status" value="1"/>
</dbReference>
<dbReference type="Pfam" id="PF00096">
    <property type="entry name" value="zf-C2H2"/>
    <property type="match status" value="8"/>
</dbReference>
<dbReference type="SMART" id="SM00349">
    <property type="entry name" value="KRAB"/>
    <property type="match status" value="1"/>
</dbReference>
<dbReference type="SMART" id="SM00355">
    <property type="entry name" value="ZnF_C2H2"/>
    <property type="match status" value="9"/>
</dbReference>
<dbReference type="SUPFAM" id="SSF57667">
    <property type="entry name" value="beta-beta-alpha zinc fingers"/>
    <property type="match status" value="5"/>
</dbReference>
<dbReference type="SUPFAM" id="SSF109640">
    <property type="entry name" value="KRAB domain (Kruppel-associated box)"/>
    <property type="match status" value="1"/>
</dbReference>
<dbReference type="PROSITE" id="PS50805">
    <property type="entry name" value="KRAB"/>
    <property type="match status" value="1"/>
</dbReference>
<dbReference type="PROSITE" id="PS00028">
    <property type="entry name" value="ZINC_FINGER_C2H2_1"/>
    <property type="match status" value="9"/>
</dbReference>
<dbReference type="PROSITE" id="PS50157">
    <property type="entry name" value="ZINC_FINGER_C2H2_2"/>
    <property type="match status" value="9"/>
</dbReference>
<reference key="1">
    <citation type="journal article" date="2009" name="PLoS Biol.">
        <title>Lineage-specific biology revealed by a finished genome assembly of the mouse.</title>
        <authorList>
            <person name="Church D.M."/>
            <person name="Goodstadt L."/>
            <person name="Hillier L.W."/>
            <person name="Zody M.C."/>
            <person name="Goldstein S."/>
            <person name="She X."/>
            <person name="Bult C.J."/>
            <person name="Agarwala R."/>
            <person name="Cherry J.L."/>
            <person name="DiCuccio M."/>
            <person name="Hlavina W."/>
            <person name="Kapustin Y."/>
            <person name="Meric P."/>
            <person name="Maglott D."/>
            <person name="Birtle Z."/>
            <person name="Marques A.C."/>
            <person name="Graves T."/>
            <person name="Zhou S."/>
            <person name="Teague B."/>
            <person name="Potamousis K."/>
            <person name="Churas C."/>
            <person name="Place M."/>
            <person name="Herschleb J."/>
            <person name="Runnheim R."/>
            <person name="Forrest D."/>
            <person name="Amos-Landgraf J."/>
            <person name="Schwartz D.C."/>
            <person name="Cheng Z."/>
            <person name="Lindblad-Toh K."/>
            <person name="Eichler E.E."/>
            <person name="Ponting C.P."/>
        </authorList>
    </citation>
    <scope>NUCLEOTIDE SEQUENCE [LARGE SCALE GENOMIC DNA]</scope>
    <source>
        <strain>C57BL/6J</strain>
    </source>
</reference>
<reference key="2">
    <citation type="journal article" date="2009" name="PLoS Genet.">
        <title>Positional cloning of zinc finger domain transcription factor Zfp69, a candidate gene for obesity-associated diabetes contributed by mouse locus Nidd/SJL.</title>
        <authorList>
            <person name="Scherneck S."/>
            <person name="Nestler M."/>
            <person name="Vogel H."/>
            <person name="Blueher M."/>
            <person name="Block M.D."/>
            <person name="Berriel Diaz M."/>
            <person name="Herzig S."/>
            <person name="Schulz N."/>
            <person name="Teichert M."/>
            <person name="Tischer S."/>
            <person name="Al-Hasani H."/>
            <person name="Kluge R."/>
            <person name="Schuermann A."/>
            <person name="Joost H.G."/>
        </authorList>
    </citation>
    <scope>POLYMORPHISM</scope>
    <scope>FUNCTION</scope>
</reference>
<reference key="3">
    <citation type="journal article" date="2015" name="Diabetologia">
        <title>The diabetes gene Zfp69 modulates hepatic insulin sensitivity in mice.</title>
        <authorList>
            <person name="Chung B."/>
            <person name="Stadion M."/>
            <person name="Schulz N."/>
            <person name="Jain D."/>
            <person name="Scherneck S."/>
            <person name="Joost H.G."/>
            <person name="Schuermann A."/>
        </authorList>
    </citation>
    <scope>SUBCELLULAR LOCATION</scope>
    <scope>FUNCTION</scope>
</reference>
<accession>A2A761</accession>
<sequence>MPQQLLITPATEATWVKLKEVSLWEDVTKMFGGEALLSHDANGTQQESLADGTTPGTPAAGSHDGATPGTTATGSHDEATPGTPAAGSHDGETPGIPAAGSHDGETPGTPTAGSHDGVTPGTTAAGSQESLTFKDIAVDLSQEEWGQLAPAYQDLYREVMLENYRNLVSVAGYQLSKPTVISQLEKGEGPCMAESQGPEDPILDVKNKLETKESTAEDDISVKLDHGITRGRLIEDDIVCSPLKKASSYSDTLESHRATCGKGTRRAIWTHKKKRQEGNKLENPESSNVILEQKHRKHKPARKRNKYKLDSIDHPVSCMRARRYPCNVCEKMFKQPIHLVEHMRTHTGEKPFRCKECGRAFSQSASLNTHQRIHTGEKPFACEECGKAFRHRSSLNQHHRTHTGEKPFTCDKCQKAFSQNISLVQHLRTHSGEKPFSCSECGKPFRQIRHLSEHVRIHTGEKPYKCTSCCKTFSHRAYLTHHQRIHTGERPYKCKECGKAFRQRIHLSNHRTVHTGVKAYECNRCGKAYRHDSSFKKHQRHHTGEKPYECTECGKSFSYNSSLSRHQKIHRRNTFRDDPGHENKRQL</sequence>
<proteinExistence type="inferred from homology"/>
<evidence type="ECO:0000255" key="1">
    <source>
        <dbReference type="PROSITE-ProRule" id="PRU00042"/>
    </source>
</evidence>
<evidence type="ECO:0000255" key="2">
    <source>
        <dbReference type="PROSITE-ProRule" id="PRU00119"/>
    </source>
</evidence>
<evidence type="ECO:0000256" key="3">
    <source>
        <dbReference type="SAM" id="MobiDB-lite"/>
    </source>
</evidence>
<evidence type="ECO:0000269" key="4">
    <source>
    </source>
</evidence>
<evidence type="ECO:0000269" key="5">
    <source>
    </source>
</evidence>
<evidence type="ECO:0000305" key="6"/>
<evidence type="ECO:0000312" key="7">
    <source>
        <dbReference type="MGI" id="MGI:107794"/>
    </source>
</evidence>
<protein>
    <recommendedName>
        <fullName evidence="6">Zinc finger protein 69</fullName>
    </recommendedName>
    <alternativeName>
        <fullName>Zinc finger protein 642</fullName>
    </alternativeName>
</protein>
<name>ZFP69_MOUSE</name>
<gene>
    <name evidence="7" type="primary">Zfp69</name>
    <name type="synonym">Znf642</name>
</gene>